<feature type="chain" id="PRO_1000068779" description="Sulfite reductase [NADPH] hemoprotein beta-component">
    <location>
        <begin position="1"/>
        <end position="578"/>
    </location>
</feature>
<feature type="region of interest" description="Disordered" evidence="2">
    <location>
        <begin position="1"/>
        <end position="20"/>
    </location>
</feature>
<feature type="compositionally biased region" description="Polar residues" evidence="2">
    <location>
        <begin position="1"/>
        <end position="11"/>
    </location>
</feature>
<feature type="binding site" evidence="1">
    <location>
        <position position="441"/>
    </location>
    <ligand>
        <name>[4Fe-4S] cluster</name>
        <dbReference type="ChEBI" id="CHEBI:49883"/>
    </ligand>
</feature>
<feature type="binding site" evidence="1">
    <location>
        <position position="447"/>
    </location>
    <ligand>
        <name>[4Fe-4S] cluster</name>
        <dbReference type="ChEBI" id="CHEBI:49883"/>
    </ligand>
</feature>
<feature type="binding site" evidence="1">
    <location>
        <position position="487"/>
    </location>
    <ligand>
        <name>[4Fe-4S] cluster</name>
        <dbReference type="ChEBI" id="CHEBI:49883"/>
    </ligand>
</feature>
<feature type="binding site" evidence="1">
    <location>
        <position position="491"/>
    </location>
    <ligand>
        <name>[4Fe-4S] cluster</name>
        <dbReference type="ChEBI" id="CHEBI:49883"/>
    </ligand>
</feature>
<feature type="binding site" description="axial binding residue" evidence="1">
    <location>
        <position position="491"/>
    </location>
    <ligand>
        <name>siroheme</name>
        <dbReference type="ChEBI" id="CHEBI:60052"/>
    </ligand>
    <ligandPart>
        <name>Fe</name>
        <dbReference type="ChEBI" id="CHEBI:18248"/>
    </ligandPart>
</feature>
<accession>A7MSZ7</accession>
<sequence length="578" mass="64673">MSANQQSNSQEVLGEVLGPLSDNERLKRESNLLRGTIEQDLQDRITGGFTADNFQLIRFHGMYQQDDRDIRNERAKQKLEPLHNVMLRARMPGGIITPKQWLAIDKFATEHSLYGSIRLTTRQTFQFHGVLKPNIKLMHQTLNSIGIDSIATAGDVNRNVLCTTNPVESELHQEAYEWAKKISEHLLPKTRAYAEIWLDGEKVESTEEDEPILGKNYLPRKFKTTVVIPPQNDVDVHANDLNFVAIADNGKLVGFNVLVGGGLAMTHCDTSTYPRRADDFGFIPLEKTLDVAAAVVTTQRDWGNRSNRKNAKTKYTLDRVGSDVFKAEVEKRAGVKFEQSRPYEFTERGDRIGWVEGIDGKHHLALFIENGRLLDFPGKPLKTGVAEIAKIHKGDFRMTANQNLIVAGVPKSQKAKIEKIAREHGLMDDGVSEQRKNSMACVAFPTCPLAMAEAERFLPQFVTDVEGILEKHGIPEEDNIILRVTGCPNGCGRAMLAEIGLVGKAPGRYNLHLGGNRGGTRVPKMCKENITDKQILEEIDQLVARWAAEREEGEAFGDFTIRAGIIQEVFVSKRDFHA</sequence>
<proteinExistence type="inferred from homology"/>
<organism>
    <name type="scientific">Vibrio campbellii (strain ATCC BAA-1116)</name>
    <dbReference type="NCBI Taxonomy" id="2902295"/>
    <lineage>
        <taxon>Bacteria</taxon>
        <taxon>Pseudomonadati</taxon>
        <taxon>Pseudomonadota</taxon>
        <taxon>Gammaproteobacteria</taxon>
        <taxon>Vibrionales</taxon>
        <taxon>Vibrionaceae</taxon>
        <taxon>Vibrio</taxon>
    </lineage>
</organism>
<protein>
    <recommendedName>
        <fullName evidence="1">Sulfite reductase [NADPH] hemoprotein beta-component</fullName>
        <shortName evidence="1">SiR-HP</shortName>
        <shortName evidence="1">SiRHP</shortName>
        <ecNumber evidence="1">1.8.1.2</ecNumber>
    </recommendedName>
</protein>
<evidence type="ECO:0000255" key="1">
    <source>
        <dbReference type="HAMAP-Rule" id="MF_01540"/>
    </source>
</evidence>
<evidence type="ECO:0000256" key="2">
    <source>
        <dbReference type="SAM" id="MobiDB-lite"/>
    </source>
</evidence>
<name>CYSI_VIBC1</name>
<dbReference type="EC" id="1.8.1.2" evidence="1"/>
<dbReference type="EMBL" id="CP000789">
    <property type="protein sequence ID" value="ABU69064.1"/>
    <property type="molecule type" value="Genomic_DNA"/>
</dbReference>
<dbReference type="RefSeq" id="WP_011999036.1">
    <property type="nucleotide sequence ID" value="NC_009783.1"/>
</dbReference>
<dbReference type="SMR" id="A7MSZ7"/>
<dbReference type="KEGG" id="vha:VIBHAR_00004"/>
<dbReference type="PATRIC" id="fig|338187.25.peg.2517"/>
<dbReference type="UniPathway" id="UPA00140">
    <property type="reaction ID" value="UER00207"/>
</dbReference>
<dbReference type="Proteomes" id="UP000008152">
    <property type="component" value="Chromosome I"/>
</dbReference>
<dbReference type="GO" id="GO:0009337">
    <property type="term" value="C:sulfite reductase complex (NADPH)"/>
    <property type="evidence" value="ECO:0007669"/>
    <property type="project" value="InterPro"/>
</dbReference>
<dbReference type="GO" id="GO:0051539">
    <property type="term" value="F:4 iron, 4 sulfur cluster binding"/>
    <property type="evidence" value="ECO:0007669"/>
    <property type="project" value="UniProtKB-KW"/>
</dbReference>
<dbReference type="GO" id="GO:0020037">
    <property type="term" value="F:heme binding"/>
    <property type="evidence" value="ECO:0007669"/>
    <property type="project" value="InterPro"/>
</dbReference>
<dbReference type="GO" id="GO:0046872">
    <property type="term" value="F:metal ion binding"/>
    <property type="evidence" value="ECO:0007669"/>
    <property type="project" value="UniProtKB-KW"/>
</dbReference>
<dbReference type="GO" id="GO:0050661">
    <property type="term" value="F:NADP binding"/>
    <property type="evidence" value="ECO:0007669"/>
    <property type="project" value="InterPro"/>
</dbReference>
<dbReference type="GO" id="GO:0050311">
    <property type="term" value="F:sulfite reductase (ferredoxin) activity"/>
    <property type="evidence" value="ECO:0007669"/>
    <property type="project" value="TreeGrafter"/>
</dbReference>
<dbReference type="GO" id="GO:0004783">
    <property type="term" value="F:sulfite reductase (NADPH) activity"/>
    <property type="evidence" value="ECO:0007669"/>
    <property type="project" value="UniProtKB-UniRule"/>
</dbReference>
<dbReference type="GO" id="GO:0019344">
    <property type="term" value="P:cysteine biosynthetic process"/>
    <property type="evidence" value="ECO:0007669"/>
    <property type="project" value="UniProtKB-KW"/>
</dbReference>
<dbReference type="GO" id="GO:0070814">
    <property type="term" value="P:hydrogen sulfide biosynthetic process"/>
    <property type="evidence" value="ECO:0007669"/>
    <property type="project" value="UniProtKB-UniRule"/>
</dbReference>
<dbReference type="GO" id="GO:0000103">
    <property type="term" value="P:sulfate assimilation"/>
    <property type="evidence" value="ECO:0007669"/>
    <property type="project" value="UniProtKB-UniRule"/>
</dbReference>
<dbReference type="FunFam" id="3.30.413.10:FF:000003">
    <property type="entry name" value="Sulfite reductase [NADPH] hemoprotein beta-component"/>
    <property type="match status" value="1"/>
</dbReference>
<dbReference type="FunFam" id="3.30.413.10:FF:000004">
    <property type="entry name" value="Sulfite reductase [NADPH] hemoprotein beta-component"/>
    <property type="match status" value="1"/>
</dbReference>
<dbReference type="Gene3D" id="3.30.413.10">
    <property type="entry name" value="Sulfite Reductase Hemoprotein, domain 1"/>
    <property type="match status" value="2"/>
</dbReference>
<dbReference type="HAMAP" id="MF_01540">
    <property type="entry name" value="CysI"/>
    <property type="match status" value="1"/>
</dbReference>
<dbReference type="InterPro" id="IPR011786">
    <property type="entry name" value="CysI"/>
</dbReference>
<dbReference type="InterPro" id="IPR005117">
    <property type="entry name" value="NiRdtase/SiRdtase_haem-b_fer"/>
</dbReference>
<dbReference type="InterPro" id="IPR036136">
    <property type="entry name" value="Nit/Sulf_reduc_fer-like_dom_sf"/>
</dbReference>
<dbReference type="InterPro" id="IPR006067">
    <property type="entry name" value="NO2/SO3_Rdtase_4Fe4S_dom"/>
</dbReference>
<dbReference type="InterPro" id="IPR045169">
    <property type="entry name" value="NO2/SO3_Rdtase_4Fe4S_prot"/>
</dbReference>
<dbReference type="InterPro" id="IPR045854">
    <property type="entry name" value="NO2/SO3_Rdtase_4Fe4S_sf"/>
</dbReference>
<dbReference type="InterPro" id="IPR006066">
    <property type="entry name" value="NO2/SO3_Rdtase_FeS/sirohaem_BS"/>
</dbReference>
<dbReference type="NCBIfam" id="TIGR02041">
    <property type="entry name" value="CysI"/>
    <property type="match status" value="1"/>
</dbReference>
<dbReference type="NCBIfam" id="NF010029">
    <property type="entry name" value="PRK13504.1"/>
    <property type="match status" value="1"/>
</dbReference>
<dbReference type="PANTHER" id="PTHR11493:SF47">
    <property type="entry name" value="SULFITE REDUCTASE [NADPH] SUBUNIT BETA"/>
    <property type="match status" value="1"/>
</dbReference>
<dbReference type="PANTHER" id="PTHR11493">
    <property type="entry name" value="SULFITE REDUCTASE [NADPH] SUBUNIT BETA-RELATED"/>
    <property type="match status" value="1"/>
</dbReference>
<dbReference type="Pfam" id="PF01077">
    <property type="entry name" value="NIR_SIR"/>
    <property type="match status" value="1"/>
</dbReference>
<dbReference type="Pfam" id="PF03460">
    <property type="entry name" value="NIR_SIR_ferr"/>
    <property type="match status" value="2"/>
</dbReference>
<dbReference type="PRINTS" id="PR00397">
    <property type="entry name" value="SIROHAEM"/>
</dbReference>
<dbReference type="SUPFAM" id="SSF56014">
    <property type="entry name" value="Nitrite and sulphite reductase 4Fe-4S domain-like"/>
    <property type="match status" value="2"/>
</dbReference>
<dbReference type="SUPFAM" id="SSF55124">
    <property type="entry name" value="Nitrite/Sulfite reductase N-terminal domain-like"/>
    <property type="match status" value="2"/>
</dbReference>
<dbReference type="PROSITE" id="PS00365">
    <property type="entry name" value="NIR_SIR"/>
    <property type="match status" value="1"/>
</dbReference>
<keyword id="KW-0004">4Fe-4S</keyword>
<keyword id="KW-0028">Amino-acid biosynthesis</keyword>
<keyword id="KW-0198">Cysteine biosynthesis</keyword>
<keyword id="KW-0349">Heme</keyword>
<keyword id="KW-0408">Iron</keyword>
<keyword id="KW-0411">Iron-sulfur</keyword>
<keyword id="KW-0479">Metal-binding</keyword>
<keyword id="KW-0521">NADP</keyword>
<keyword id="KW-0560">Oxidoreductase</keyword>
<comment type="function">
    <text evidence="1">Component of the sulfite reductase complex that catalyzes the 6-electron reduction of sulfite to sulfide. This is one of several activities required for the biosynthesis of L-cysteine from sulfate.</text>
</comment>
<comment type="catalytic activity">
    <reaction evidence="1">
        <text>hydrogen sulfide + 3 NADP(+) + 3 H2O = sulfite + 3 NADPH + 4 H(+)</text>
        <dbReference type="Rhea" id="RHEA:13801"/>
        <dbReference type="ChEBI" id="CHEBI:15377"/>
        <dbReference type="ChEBI" id="CHEBI:15378"/>
        <dbReference type="ChEBI" id="CHEBI:17359"/>
        <dbReference type="ChEBI" id="CHEBI:29919"/>
        <dbReference type="ChEBI" id="CHEBI:57783"/>
        <dbReference type="ChEBI" id="CHEBI:58349"/>
        <dbReference type="EC" id="1.8.1.2"/>
    </reaction>
</comment>
<comment type="cofactor">
    <cofactor evidence="1">
        <name>siroheme</name>
        <dbReference type="ChEBI" id="CHEBI:60052"/>
    </cofactor>
    <text evidence="1">Binds 1 siroheme per subunit.</text>
</comment>
<comment type="cofactor">
    <cofactor evidence="1">
        <name>[4Fe-4S] cluster</name>
        <dbReference type="ChEBI" id="CHEBI:49883"/>
    </cofactor>
    <text evidence="1">Binds 1 [4Fe-4S] cluster per subunit.</text>
</comment>
<comment type="pathway">
    <text evidence="1">Sulfur metabolism; hydrogen sulfide biosynthesis; hydrogen sulfide from sulfite (NADPH route): step 1/1.</text>
</comment>
<comment type="subunit">
    <text evidence="1">Alpha(8)-beta(8). The alpha component is a flavoprotein, the beta component is a hemoprotein.</text>
</comment>
<comment type="similarity">
    <text evidence="1">Belongs to the nitrite and sulfite reductase 4Fe-4S domain family.</text>
</comment>
<gene>
    <name evidence="1" type="primary">cysI</name>
    <name type="ordered locus">VIBHAR_00004</name>
</gene>
<reference key="1">
    <citation type="submission" date="2007-08" db="EMBL/GenBank/DDBJ databases">
        <authorList>
            <consortium name="The Vibrio harveyi Genome Sequencing Project"/>
            <person name="Bassler B."/>
            <person name="Clifton S.W."/>
            <person name="Fulton L."/>
            <person name="Delehaunty K."/>
            <person name="Fronick C."/>
            <person name="Harrison M."/>
            <person name="Markivic C."/>
            <person name="Fulton R."/>
            <person name="Tin-Wollam A.-M."/>
            <person name="Shah N."/>
            <person name="Pepin K."/>
            <person name="Nash W."/>
            <person name="Thiruvilangam P."/>
            <person name="Bhonagiri V."/>
            <person name="Waters C."/>
            <person name="Tu K.C."/>
            <person name="Irgon J."/>
            <person name="Wilson R.K."/>
        </authorList>
    </citation>
    <scope>NUCLEOTIDE SEQUENCE [LARGE SCALE GENOMIC DNA]</scope>
    <source>
        <strain>ATCC BAA-1116 / BB120</strain>
    </source>
</reference>